<organism>
    <name type="scientific">Haemophilus influenzae (strain ATCC 51907 / DSM 11121 / KW20 / Rd)</name>
    <dbReference type="NCBI Taxonomy" id="71421"/>
    <lineage>
        <taxon>Bacteria</taxon>
        <taxon>Pseudomonadati</taxon>
        <taxon>Pseudomonadota</taxon>
        <taxon>Gammaproteobacteria</taxon>
        <taxon>Pasteurellales</taxon>
        <taxon>Pasteurellaceae</taxon>
        <taxon>Haemophilus</taxon>
    </lineage>
</organism>
<accession>P43733</accession>
<keyword id="KW-0067">ATP-binding</keyword>
<keyword id="KW-0143">Chaperone</keyword>
<keyword id="KW-0963">Cytoplasm</keyword>
<keyword id="KW-0413">Isomerase</keyword>
<keyword id="KW-0547">Nucleotide-binding</keyword>
<keyword id="KW-1185">Reference proteome</keyword>
<reference key="1">
    <citation type="journal article" date="1995" name="Science">
        <title>Whole-genome random sequencing and assembly of Haemophilus influenzae Rd.</title>
        <authorList>
            <person name="Fleischmann R.D."/>
            <person name="Adams M.D."/>
            <person name="White O."/>
            <person name="Clayton R.A."/>
            <person name="Kirkness E.F."/>
            <person name="Kerlavage A.R."/>
            <person name="Bult C.J."/>
            <person name="Tomb J.-F."/>
            <person name="Dougherty B.A."/>
            <person name="Merrick J.M."/>
            <person name="McKenney K."/>
            <person name="Sutton G.G."/>
            <person name="FitzHugh W."/>
            <person name="Fields C.A."/>
            <person name="Gocayne J.D."/>
            <person name="Scott J.D."/>
            <person name="Shirley R."/>
            <person name="Liu L.-I."/>
            <person name="Glodek A."/>
            <person name="Kelley J.M."/>
            <person name="Weidman J.F."/>
            <person name="Phillips C.A."/>
            <person name="Spriggs T."/>
            <person name="Hedblom E."/>
            <person name="Cotton M.D."/>
            <person name="Utterback T.R."/>
            <person name="Hanna M.C."/>
            <person name="Nguyen D.T."/>
            <person name="Saudek D.M."/>
            <person name="Brandon R.C."/>
            <person name="Fine L.D."/>
            <person name="Fritchman J.L."/>
            <person name="Fuhrmann J.L."/>
            <person name="Geoghagen N.S.M."/>
            <person name="Gnehm C.L."/>
            <person name="McDonald L.A."/>
            <person name="Small K.V."/>
            <person name="Fraser C.M."/>
            <person name="Smith H.O."/>
            <person name="Venter J.C."/>
        </authorList>
    </citation>
    <scope>NUCLEOTIDE SEQUENCE [LARGE SCALE GENOMIC DNA]</scope>
    <source>
        <strain>ATCC 51907 / DSM 11121 / KW20 / Rd</strain>
    </source>
</reference>
<sequence>MAAKDVKFGNDARVKMLKGVNVLADAVKVTLGPKGRHVILDKSFGAPTITKDGVSVAREIELEDKFENMGAQMVKEVASKANDAAGDGTTTATVLAQAIVNEGLKAVAAGMNPMDLKRGIDKAVSAVVSELKNLSKPCETAKEIEQVGTISANSDSIVGQLISQAMEKVGKEGVITVEDGTGLEDELDVVEGMQFDRGYLSPYFINKPETATVELDNPYLLLVDKKISNIRELLPVLEGVAKAGKPLLIIAEDVEGEALATLVVNTMRGIVKVAAVKAPGFGDRRKAMLQDIAILTAGTVISEEIGMELEKATLEDLGQAKRVVINKDNTTIIDGIGDEAQIKGRVAQIRQQIEESTSDYDKEKLQERVAKLAGGVAVIKVGAATEVEMKEKKDRVDDALHATRAAVEEGIVAGGGVALVRAAAKVAASLKGDNEEQNVGIKLALRAMEAPLRQIVTNAGEEASVVASAVKNGEGNFGYNAGTEQYGDMIEMGILDPTKVTRSALQFAASVAGLMITTECMVTDLPKDDKADLGAAGMGGMGGMGGMM</sequence>
<comment type="function">
    <text evidence="1">Together with its co-chaperonin GroES, plays an essential role in assisting protein folding. The GroEL-GroES system forms a nano-cage that allows encapsulation of the non-native substrate proteins and provides a physical environment optimized to promote and accelerate protein folding.</text>
</comment>
<comment type="catalytic activity">
    <reaction evidence="1">
        <text>ATP + H2O + a folded polypeptide = ADP + phosphate + an unfolded polypeptide.</text>
        <dbReference type="EC" id="5.6.1.7"/>
    </reaction>
</comment>
<comment type="subunit">
    <text evidence="1">Forms a cylinder of 14 subunits composed of two heptameric rings stacked back-to-back. Interacts with the co-chaperonin GroES.</text>
</comment>
<comment type="subcellular location">
    <subcellularLocation>
        <location evidence="1">Cytoplasm</location>
    </subcellularLocation>
</comment>
<comment type="similarity">
    <text evidence="1">Belongs to the chaperonin (HSP60) family.</text>
</comment>
<gene>
    <name evidence="1" type="primary">groEL</name>
    <name evidence="1" type="synonym">groL</name>
    <name type="synonym">mopA</name>
    <name type="ordered locus">HI_0543</name>
</gene>
<feature type="chain" id="PRO_0000063387" description="Chaperonin GroEL">
    <location>
        <begin position="1"/>
        <end position="548"/>
    </location>
</feature>
<feature type="binding site" evidence="1">
    <location>
        <begin position="30"/>
        <end position="33"/>
    </location>
    <ligand>
        <name>ATP</name>
        <dbReference type="ChEBI" id="CHEBI:30616"/>
    </ligand>
</feature>
<feature type="binding site" evidence="1">
    <location>
        <position position="51"/>
    </location>
    <ligand>
        <name>ATP</name>
        <dbReference type="ChEBI" id="CHEBI:30616"/>
    </ligand>
</feature>
<feature type="binding site" evidence="1">
    <location>
        <begin position="87"/>
        <end position="91"/>
    </location>
    <ligand>
        <name>ATP</name>
        <dbReference type="ChEBI" id="CHEBI:30616"/>
    </ligand>
</feature>
<feature type="binding site" evidence="1">
    <location>
        <position position="415"/>
    </location>
    <ligand>
        <name>ATP</name>
        <dbReference type="ChEBI" id="CHEBI:30616"/>
    </ligand>
</feature>
<feature type="binding site" evidence="1">
    <location>
        <position position="496"/>
    </location>
    <ligand>
        <name>ATP</name>
        <dbReference type="ChEBI" id="CHEBI:30616"/>
    </ligand>
</feature>
<evidence type="ECO:0000255" key="1">
    <source>
        <dbReference type="HAMAP-Rule" id="MF_00600"/>
    </source>
</evidence>
<name>CH60_HAEIN</name>
<proteinExistence type="inferred from homology"/>
<protein>
    <recommendedName>
        <fullName evidence="1">Chaperonin GroEL</fullName>
        <ecNumber evidence="1">5.6.1.7</ecNumber>
    </recommendedName>
    <alternativeName>
        <fullName evidence="1">60 kDa chaperonin</fullName>
    </alternativeName>
    <alternativeName>
        <fullName evidence="1">Chaperonin-60</fullName>
        <shortName evidence="1">Cpn60</shortName>
    </alternativeName>
</protein>
<dbReference type="EC" id="5.6.1.7" evidence="1"/>
<dbReference type="EMBL" id="L42023">
    <property type="protein sequence ID" value="AAC22201.1"/>
    <property type="molecule type" value="Genomic_DNA"/>
</dbReference>
<dbReference type="PIR" id="C64076">
    <property type="entry name" value="C64076"/>
</dbReference>
<dbReference type="RefSeq" id="NP_438701.1">
    <property type="nucleotide sequence ID" value="NC_000907.1"/>
</dbReference>
<dbReference type="SMR" id="P43733"/>
<dbReference type="STRING" id="71421.HI_0543"/>
<dbReference type="EnsemblBacteria" id="AAC22201">
    <property type="protein sequence ID" value="AAC22201"/>
    <property type="gene ID" value="HI_0543"/>
</dbReference>
<dbReference type="KEGG" id="hin:HI_0543"/>
<dbReference type="PATRIC" id="fig|71421.8.peg.562"/>
<dbReference type="eggNOG" id="COG0459">
    <property type="taxonomic scope" value="Bacteria"/>
</dbReference>
<dbReference type="HOGENOM" id="CLU_016503_3_0_6"/>
<dbReference type="OrthoDB" id="9766614at2"/>
<dbReference type="PhylomeDB" id="P43733"/>
<dbReference type="BioCyc" id="HINF71421:G1GJ1-556-MONOMER"/>
<dbReference type="Proteomes" id="UP000000579">
    <property type="component" value="Chromosome"/>
</dbReference>
<dbReference type="GO" id="GO:1990220">
    <property type="term" value="C:GroEL-GroES complex"/>
    <property type="evidence" value="ECO:0000318"/>
    <property type="project" value="GO_Central"/>
</dbReference>
<dbReference type="GO" id="GO:0005524">
    <property type="term" value="F:ATP binding"/>
    <property type="evidence" value="ECO:0000318"/>
    <property type="project" value="GO_Central"/>
</dbReference>
<dbReference type="GO" id="GO:0140662">
    <property type="term" value="F:ATP-dependent protein folding chaperone"/>
    <property type="evidence" value="ECO:0007669"/>
    <property type="project" value="InterPro"/>
</dbReference>
<dbReference type="GO" id="GO:0016853">
    <property type="term" value="F:isomerase activity"/>
    <property type="evidence" value="ECO:0007669"/>
    <property type="project" value="UniProtKB-KW"/>
</dbReference>
<dbReference type="GO" id="GO:0051082">
    <property type="term" value="F:unfolded protein binding"/>
    <property type="evidence" value="ECO:0000318"/>
    <property type="project" value="GO_Central"/>
</dbReference>
<dbReference type="GO" id="GO:0051085">
    <property type="term" value="P:chaperone cofactor-dependent protein refolding"/>
    <property type="evidence" value="ECO:0000318"/>
    <property type="project" value="GO_Central"/>
</dbReference>
<dbReference type="GO" id="GO:0042026">
    <property type="term" value="P:protein refolding"/>
    <property type="evidence" value="ECO:0007669"/>
    <property type="project" value="UniProtKB-UniRule"/>
</dbReference>
<dbReference type="GO" id="GO:0009408">
    <property type="term" value="P:response to heat"/>
    <property type="evidence" value="ECO:0000318"/>
    <property type="project" value="GO_Central"/>
</dbReference>
<dbReference type="CDD" id="cd03344">
    <property type="entry name" value="GroEL"/>
    <property type="match status" value="1"/>
</dbReference>
<dbReference type="FunFam" id="1.10.560.10:FF:000001">
    <property type="entry name" value="60 kDa chaperonin"/>
    <property type="match status" value="1"/>
</dbReference>
<dbReference type="FunFam" id="3.50.7.10:FF:000001">
    <property type="entry name" value="60 kDa chaperonin"/>
    <property type="match status" value="1"/>
</dbReference>
<dbReference type="Gene3D" id="3.50.7.10">
    <property type="entry name" value="GroEL"/>
    <property type="match status" value="1"/>
</dbReference>
<dbReference type="Gene3D" id="1.10.560.10">
    <property type="entry name" value="GroEL-like equatorial domain"/>
    <property type="match status" value="1"/>
</dbReference>
<dbReference type="Gene3D" id="3.30.260.10">
    <property type="entry name" value="TCP-1-like chaperonin intermediate domain"/>
    <property type="match status" value="1"/>
</dbReference>
<dbReference type="HAMAP" id="MF_00600">
    <property type="entry name" value="CH60"/>
    <property type="match status" value="1"/>
</dbReference>
<dbReference type="InterPro" id="IPR018370">
    <property type="entry name" value="Chaperonin_Cpn60_CS"/>
</dbReference>
<dbReference type="InterPro" id="IPR001844">
    <property type="entry name" value="Cpn60/GroEL"/>
</dbReference>
<dbReference type="InterPro" id="IPR002423">
    <property type="entry name" value="Cpn60/GroEL/TCP-1"/>
</dbReference>
<dbReference type="InterPro" id="IPR027409">
    <property type="entry name" value="GroEL-like_apical_dom_sf"/>
</dbReference>
<dbReference type="InterPro" id="IPR027413">
    <property type="entry name" value="GROEL-like_equatorial_sf"/>
</dbReference>
<dbReference type="InterPro" id="IPR027410">
    <property type="entry name" value="TCP-1-like_intermed_sf"/>
</dbReference>
<dbReference type="NCBIfam" id="TIGR02348">
    <property type="entry name" value="GroEL"/>
    <property type="match status" value="1"/>
</dbReference>
<dbReference type="NCBIfam" id="NF000592">
    <property type="entry name" value="PRK00013.1"/>
    <property type="match status" value="1"/>
</dbReference>
<dbReference type="NCBIfam" id="NF009487">
    <property type="entry name" value="PRK12849.1"/>
    <property type="match status" value="1"/>
</dbReference>
<dbReference type="NCBIfam" id="NF009488">
    <property type="entry name" value="PRK12850.1"/>
    <property type="match status" value="1"/>
</dbReference>
<dbReference type="NCBIfam" id="NF009489">
    <property type="entry name" value="PRK12851.1"/>
    <property type="match status" value="1"/>
</dbReference>
<dbReference type="PANTHER" id="PTHR45633">
    <property type="entry name" value="60 KDA HEAT SHOCK PROTEIN, MITOCHONDRIAL"/>
    <property type="match status" value="1"/>
</dbReference>
<dbReference type="Pfam" id="PF00118">
    <property type="entry name" value="Cpn60_TCP1"/>
    <property type="match status" value="1"/>
</dbReference>
<dbReference type="PRINTS" id="PR00298">
    <property type="entry name" value="CHAPERONIN60"/>
</dbReference>
<dbReference type="SUPFAM" id="SSF52029">
    <property type="entry name" value="GroEL apical domain-like"/>
    <property type="match status" value="1"/>
</dbReference>
<dbReference type="SUPFAM" id="SSF48592">
    <property type="entry name" value="GroEL equatorial domain-like"/>
    <property type="match status" value="1"/>
</dbReference>
<dbReference type="SUPFAM" id="SSF54849">
    <property type="entry name" value="GroEL-intermediate domain like"/>
    <property type="match status" value="1"/>
</dbReference>
<dbReference type="PROSITE" id="PS00296">
    <property type="entry name" value="CHAPERONINS_CPN60"/>
    <property type="match status" value="1"/>
</dbReference>